<dbReference type="EMBL" id="AF447451">
    <property type="protein sequence ID" value="AAL40345.1"/>
    <property type="molecule type" value="mRNA"/>
</dbReference>
<dbReference type="EMBL" id="AB076563">
    <property type="protein sequence ID" value="BAC53758.1"/>
    <property type="molecule type" value="mRNA"/>
</dbReference>
<dbReference type="EMBL" id="AY358181">
    <property type="protein sequence ID" value="AAQ88548.1"/>
    <property type="status" value="ALT_INIT"/>
    <property type="molecule type" value="mRNA"/>
</dbReference>
<dbReference type="CCDS" id="CCDS12302.1"/>
<dbReference type="RefSeq" id="NP_001298126.1">
    <property type="nucleotide sequence ID" value="NM_001311197.1"/>
</dbReference>
<dbReference type="RefSeq" id="NP_543140.1">
    <property type="nucleotide sequence ID" value="NM_080864.4"/>
</dbReference>
<dbReference type="PDB" id="2FHW">
    <property type="method" value="NMR"/>
    <property type="chains" value="A=119-142, B=26-52"/>
</dbReference>
<dbReference type="PDB" id="2K1V">
    <property type="method" value="NMR"/>
    <property type="chains" value="B=26-52"/>
</dbReference>
<dbReference type="PDBsum" id="2FHW"/>
<dbReference type="PDBsum" id="2K1V"/>
<dbReference type="SMR" id="Q8WXF3"/>
<dbReference type="BioGRID" id="125590">
    <property type="interactions" value="3"/>
</dbReference>
<dbReference type="FunCoup" id="Q8WXF3">
    <property type="interactions" value="703"/>
</dbReference>
<dbReference type="IntAct" id="Q8WXF3">
    <property type="interactions" value="1"/>
</dbReference>
<dbReference type="MINT" id="Q8WXF3"/>
<dbReference type="STRING" id="9606.ENSP00000397415"/>
<dbReference type="GlyGen" id="Q8WXF3">
    <property type="glycosylation" value="1 site"/>
</dbReference>
<dbReference type="iPTMnet" id="Q8WXF3"/>
<dbReference type="PhosphoSitePlus" id="Q8WXF3"/>
<dbReference type="BioMuta" id="RLN3"/>
<dbReference type="DMDM" id="37999891"/>
<dbReference type="PaxDb" id="9606-ENSP00000397415"/>
<dbReference type="Antibodypedia" id="50312">
    <property type="antibodies" value="145 antibodies from 24 providers"/>
</dbReference>
<dbReference type="DNASU" id="117579"/>
<dbReference type="Ensembl" id="ENST00000431365.3">
    <property type="protein sequence ID" value="ENSP00000397415.2"/>
    <property type="gene ID" value="ENSG00000171136.7"/>
</dbReference>
<dbReference type="Ensembl" id="ENST00000673090.1">
    <property type="protein sequence ID" value="ENSP00000500641.1"/>
    <property type="gene ID" value="ENSG00000288474.1"/>
</dbReference>
<dbReference type="GeneID" id="117579"/>
<dbReference type="KEGG" id="hsa:117579"/>
<dbReference type="MANE-Select" id="ENST00000431365.3">
    <property type="protein sequence ID" value="ENSP00000397415.2"/>
    <property type="RefSeq nucleotide sequence ID" value="NM_080864.4"/>
    <property type="RefSeq protein sequence ID" value="NP_543140.1"/>
</dbReference>
<dbReference type="UCSC" id="uc002mxw.2">
    <property type="organism name" value="human"/>
</dbReference>
<dbReference type="AGR" id="HGNC:17135"/>
<dbReference type="CTD" id="117579"/>
<dbReference type="DisGeNET" id="117579"/>
<dbReference type="GeneCards" id="RLN3"/>
<dbReference type="HGNC" id="HGNC:17135">
    <property type="gene designation" value="RLN3"/>
</dbReference>
<dbReference type="HPA" id="ENSG00000171136">
    <property type="expression patterns" value="Group enriched (parathyroid gland, testis)"/>
</dbReference>
<dbReference type="MIM" id="606855">
    <property type="type" value="gene"/>
</dbReference>
<dbReference type="neXtProt" id="NX_Q8WXF3"/>
<dbReference type="OpenTargets" id="ENSG00000171136"/>
<dbReference type="PharmGKB" id="PA34401"/>
<dbReference type="VEuPathDB" id="HostDB:ENSG00000171136"/>
<dbReference type="eggNOG" id="ENOG502S2C4">
    <property type="taxonomic scope" value="Eukaryota"/>
</dbReference>
<dbReference type="GeneTree" id="ENSGT00940000154396"/>
<dbReference type="HOGENOM" id="CLU_120043_0_0_1"/>
<dbReference type="InParanoid" id="Q8WXF3"/>
<dbReference type="OMA" id="WGCSKRE"/>
<dbReference type="OrthoDB" id="9443437at2759"/>
<dbReference type="PAN-GO" id="Q8WXF3">
    <property type="GO annotations" value="1 GO annotation based on evolutionary models"/>
</dbReference>
<dbReference type="PhylomeDB" id="Q8WXF3"/>
<dbReference type="TreeFam" id="TF333404"/>
<dbReference type="PathwayCommons" id="Q8WXF3"/>
<dbReference type="Reactome" id="R-HSA-418555">
    <property type="pathway name" value="G alpha (s) signalling events"/>
</dbReference>
<dbReference type="Reactome" id="R-HSA-418594">
    <property type="pathway name" value="G alpha (i) signalling events"/>
</dbReference>
<dbReference type="Reactome" id="R-HSA-444821">
    <property type="pathway name" value="Relaxin receptors"/>
</dbReference>
<dbReference type="SignaLink" id="Q8WXF3"/>
<dbReference type="BioGRID-ORCS" id="117579">
    <property type="hits" value="13 hits in 1137 CRISPR screens"/>
</dbReference>
<dbReference type="EvolutionaryTrace" id="Q8WXF3"/>
<dbReference type="GenomeRNAi" id="117579"/>
<dbReference type="Pharos" id="Q8WXF3">
    <property type="development level" value="Tbio"/>
</dbReference>
<dbReference type="PRO" id="PR:Q8WXF3"/>
<dbReference type="Proteomes" id="UP000005640">
    <property type="component" value="Chromosome 19"/>
</dbReference>
<dbReference type="RNAct" id="Q8WXF3">
    <property type="molecule type" value="protein"/>
</dbReference>
<dbReference type="Bgee" id="ENSG00000171136">
    <property type="expression patterns" value="Expressed in male germ line stem cell (sensu Vertebrata) in testis and 57 other cell types or tissues"/>
</dbReference>
<dbReference type="ExpressionAtlas" id="Q8WXF3">
    <property type="expression patterns" value="baseline and differential"/>
</dbReference>
<dbReference type="GO" id="GO:0005576">
    <property type="term" value="C:extracellular region"/>
    <property type="evidence" value="ECO:0000304"/>
    <property type="project" value="Reactome"/>
</dbReference>
<dbReference type="GO" id="GO:0001664">
    <property type="term" value="F:G protein-coupled receptor binding"/>
    <property type="evidence" value="ECO:0000318"/>
    <property type="project" value="GO_Central"/>
</dbReference>
<dbReference type="GO" id="GO:0005179">
    <property type="term" value="F:hormone activity"/>
    <property type="evidence" value="ECO:0007669"/>
    <property type="project" value="UniProtKB-KW"/>
</dbReference>
<dbReference type="CDD" id="cd04365">
    <property type="entry name" value="IlGF_relaxin_like"/>
    <property type="match status" value="1"/>
</dbReference>
<dbReference type="InterPro" id="IPR016179">
    <property type="entry name" value="Insulin-like"/>
</dbReference>
<dbReference type="InterPro" id="IPR051777">
    <property type="entry name" value="Insulin-like_neuro_ligands"/>
</dbReference>
<dbReference type="InterPro" id="IPR036438">
    <property type="entry name" value="Insulin-like_sf"/>
</dbReference>
<dbReference type="InterPro" id="IPR022353">
    <property type="entry name" value="Insulin_CS"/>
</dbReference>
<dbReference type="InterPro" id="IPR022352">
    <property type="entry name" value="Insulin_family"/>
</dbReference>
<dbReference type="PANTHER" id="PTHR20968">
    <property type="entry name" value="ILGF DOMAIN-CONTAINING PROTEIN"/>
    <property type="match status" value="1"/>
</dbReference>
<dbReference type="PANTHER" id="PTHR20968:SF0">
    <property type="entry name" value="RELAXIN-3"/>
    <property type="match status" value="1"/>
</dbReference>
<dbReference type="Pfam" id="PF00049">
    <property type="entry name" value="Insulin"/>
    <property type="match status" value="1"/>
</dbReference>
<dbReference type="PRINTS" id="PR00276">
    <property type="entry name" value="INSULINFAMLY"/>
</dbReference>
<dbReference type="SMART" id="SM00078">
    <property type="entry name" value="IlGF"/>
    <property type="match status" value="1"/>
</dbReference>
<dbReference type="SUPFAM" id="SSF56994">
    <property type="entry name" value="Insulin-like"/>
    <property type="match status" value="1"/>
</dbReference>
<dbReference type="PROSITE" id="PS00262">
    <property type="entry name" value="INSULIN"/>
    <property type="match status" value="1"/>
</dbReference>
<reference key="1">
    <citation type="submission" date="2001-11" db="EMBL/GenBank/DDBJ databases">
        <title>Homo sapiens insulin homolog polypeptide.</title>
        <authorList>
            <person name="Holloway J.L."/>
            <person name="Lok S."/>
            <person name="Jaspers S.R."/>
        </authorList>
    </citation>
    <scope>NUCLEOTIDE SEQUENCE [MRNA]</scope>
</reference>
<reference key="2">
    <citation type="journal article" date="2003" name="Regul. Pept.">
        <title>Production of recombinant human relaxin 3 in AtT20 cells.</title>
        <authorList>
            <person name="Kizawa H."/>
            <person name="Nishi K."/>
            <person name="Ishibashi Y."/>
            <person name="Harada M."/>
            <person name="Asano T."/>
            <person name="Ito Y."/>
            <person name="Suzuki N."/>
            <person name="Hinuma S."/>
            <person name="Fujisawa Y."/>
            <person name="Onda H."/>
            <person name="Nishimura O."/>
            <person name="Fujino M."/>
        </authorList>
    </citation>
    <scope>NUCLEOTIDE SEQUENCE [MRNA]</scope>
    <scope>PROTEIN SEQUENCE OF 26-34 AND 119-127</scope>
</reference>
<reference key="3">
    <citation type="journal article" date="2003" name="Genome Res.">
        <title>The secreted protein discovery initiative (SPDI), a large-scale effort to identify novel human secreted and transmembrane proteins: a bioinformatics assessment.</title>
        <authorList>
            <person name="Clark H.F."/>
            <person name="Gurney A.L."/>
            <person name="Abaya E."/>
            <person name="Baker K."/>
            <person name="Baldwin D.T."/>
            <person name="Brush J."/>
            <person name="Chen J."/>
            <person name="Chow B."/>
            <person name="Chui C."/>
            <person name="Crowley C."/>
            <person name="Currell B."/>
            <person name="Deuel B."/>
            <person name="Dowd P."/>
            <person name="Eaton D."/>
            <person name="Foster J.S."/>
            <person name="Grimaldi C."/>
            <person name="Gu Q."/>
            <person name="Hass P.E."/>
            <person name="Heldens S."/>
            <person name="Huang A."/>
            <person name="Kim H.S."/>
            <person name="Klimowski L."/>
            <person name="Jin Y."/>
            <person name="Johnson S."/>
            <person name="Lee J."/>
            <person name="Lewis L."/>
            <person name="Liao D."/>
            <person name="Mark M.R."/>
            <person name="Robbie E."/>
            <person name="Sanchez C."/>
            <person name="Schoenfeld J."/>
            <person name="Seshagiri S."/>
            <person name="Simmons L."/>
            <person name="Singh J."/>
            <person name="Smith V."/>
            <person name="Stinson J."/>
            <person name="Vagts A."/>
            <person name="Vandlen R.L."/>
            <person name="Watanabe C."/>
            <person name="Wieand D."/>
            <person name="Woods K."/>
            <person name="Xie M.-H."/>
            <person name="Yansura D.G."/>
            <person name="Yi S."/>
            <person name="Yu G."/>
            <person name="Yuan J."/>
            <person name="Zhang M."/>
            <person name="Zhang Z."/>
            <person name="Goddard A.D."/>
            <person name="Wood W.I."/>
            <person name="Godowski P.J."/>
            <person name="Gray A.M."/>
        </authorList>
    </citation>
    <scope>NUCLEOTIDE SEQUENCE [LARGE SCALE MRNA]</scope>
</reference>
<reference key="4">
    <citation type="journal article" date="2003" name="J. Biol. Chem.">
        <title>H3 relaxin is a specific ligand for LGR7 and activates the receptor by interacting with both the ectodomain and the exoloop 2.</title>
        <authorList>
            <person name="Sudo S."/>
            <person name="Kumagai J."/>
            <person name="Nishi S."/>
            <person name="Layfield S."/>
            <person name="Ferraro T."/>
            <person name="Bathgate R.A.D."/>
            <person name="Hsueh A.J.W."/>
        </authorList>
    </citation>
    <scope>INTERACTION WITH LGR7</scope>
</reference>
<reference key="5">
    <citation type="journal article" date="2003" name="J. Biol. Chem.">
        <title>Identification of relaxin-3/INSL7 as an endogenous ligand for the orphan G-protein coupled receptor GPCR135.</title>
        <authorList>
            <person name="Liu C."/>
            <person name="Eriste E."/>
            <person name="Sutton S."/>
            <person name="Chen J."/>
            <person name="Roland B."/>
            <person name="Kuei C."/>
            <person name="Farmer N."/>
            <person name="Joernvall H."/>
            <person name="Sillard R."/>
            <person name="Lovenberg T.W."/>
        </authorList>
    </citation>
    <scope>INTERACTION WITH RXFP3</scope>
</reference>
<reference key="6">
    <citation type="journal article" date="2003" name="J. Biol. Chem.">
        <title>Identification of relaxin-3/INSL7 as a ligand for GPCR142.</title>
        <authorList>
            <person name="Liu C."/>
            <person name="Chen J."/>
            <person name="Sutton S."/>
            <person name="Roland B."/>
            <person name="Kuei C."/>
            <person name="Farmer N."/>
            <person name="Sillard R."/>
            <person name="Lovenberg T.W."/>
        </authorList>
    </citation>
    <scope>INTERACTION WITH RXFP4</scope>
</reference>
<reference key="7">
    <citation type="journal article" date="2006" name="J. Biol. Chem.">
        <title>Solution structure and novel insights into the determinants of the receptor specificity of human relaxin-3.</title>
        <authorList>
            <person name="Rosengren K.J."/>
            <person name="Lin F."/>
            <person name="Bathgate R.A."/>
            <person name="Tregear G.W."/>
            <person name="Daly N.L."/>
            <person name="Wade J.D."/>
            <person name="Craik D.J."/>
        </authorList>
    </citation>
    <scope>STRUCTURE BY NMR OF 26-142</scope>
    <scope>DISULFIDE BONDS</scope>
</reference>
<feature type="signal peptide" evidence="2">
    <location>
        <begin position="1"/>
        <end position="25"/>
    </location>
</feature>
<feature type="peptide" id="PRO_0000016082" description="Relaxin-3 B chain" evidence="1">
    <location>
        <begin position="26"/>
        <end position="52"/>
    </location>
</feature>
<feature type="propeptide" id="PRO_0000016083" description="Connecting peptide" evidence="1">
    <location>
        <begin position="55"/>
        <end position="118"/>
    </location>
</feature>
<feature type="peptide" id="PRO_0000016084" description="Relaxin-3 A chain" evidence="1">
    <location>
        <begin position="119"/>
        <end position="142"/>
    </location>
</feature>
<feature type="disulfide bond" description="Interchain (between B and A chains)" evidence="3">
    <location>
        <begin position="35"/>
        <end position="129"/>
    </location>
</feature>
<feature type="disulfide bond" description="Interchain (between B and A chains)" evidence="3">
    <location>
        <begin position="47"/>
        <end position="142"/>
    </location>
</feature>
<feature type="disulfide bond" evidence="3">
    <location>
        <begin position="128"/>
        <end position="133"/>
    </location>
</feature>
<feature type="strand" evidence="5">
    <location>
        <begin position="29"/>
        <end position="32"/>
    </location>
</feature>
<feature type="helix" evidence="5">
    <location>
        <begin position="37"/>
        <end position="47"/>
    </location>
</feature>
<feature type="helix" evidence="5">
    <location>
        <begin position="120"/>
        <end position="130"/>
    </location>
</feature>
<feature type="helix" evidence="5">
    <location>
        <begin position="135"/>
        <end position="139"/>
    </location>
</feature>
<organism>
    <name type="scientific">Homo sapiens</name>
    <name type="common">Human</name>
    <dbReference type="NCBI Taxonomy" id="9606"/>
    <lineage>
        <taxon>Eukaryota</taxon>
        <taxon>Metazoa</taxon>
        <taxon>Chordata</taxon>
        <taxon>Craniata</taxon>
        <taxon>Vertebrata</taxon>
        <taxon>Euteleostomi</taxon>
        <taxon>Mammalia</taxon>
        <taxon>Eutheria</taxon>
        <taxon>Euarchontoglires</taxon>
        <taxon>Primates</taxon>
        <taxon>Haplorrhini</taxon>
        <taxon>Catarrhini</taxon>
        <taxon>Hominidae</taxon>
        <taxon>Homo</taxon>
    </lineage>
</organism>
<comment type="function">
    <text>May play a role in neuropeptide signaling processes. Ligand for LGR7, RXFP3 and RXFP4.</text>
</comment>
<comment type="subunit">
    <text>Heterodimer of a B chain and an A chain linked by two disulfide bonds.</text>
</comment>
<comment type="interaction">
    <interactant intactId="EBI-9519546">
        <id>Q8WXF3</id>
    </interactant>
    <interactant intactId="EBI-9519524">
        <id>Q8TDU9</id>
        <label>RXFP4</label>
    </interactant>
    <organismsDiffer>false</organismsDiffer>
    <experiments>9</experiments>
</comment>
<comment type="subcellular location">
    <subcellularLocation>
        <location>Secreted</location>
    </subcellularLocation>
</comment>
<comment type="similarity">
    <text evidence="4">Belongs to the insulin family.</text>
</comment>
<comment type="sequence caution" evidence="4">
    <conflict type="erroneous initiation">
        <sequence resource="EMBL-CDS" id="AAQ88548"/>
    </conflict>
</comment>
<name>REL3_HUMAN</name>
<gene>
    <name type="primary">RLN3</name>
    <name type="synonym">INSL7</name>
    <name type="synonym">RXN3</name>
    <name type="synonym">ZINS4</name>
    <name type="ORF">UNQ6188/PRO20213</name>
</gene>
<protein>
    <recommendedName>
        <fullName>Relaxin-3</fullName>
    </recommendedName>
    <alternativeName>
        <fullName>Insulin-like peptide INSL7</fullName>
        <shortName>Insulin-like peptide 7</shortName>
    </alternativeName>
    <alternativeName>
        <fullName>Prorelaxin H3</fullName>
    </alternativeName>
    <component>
        <recommendedName>
            <fullName>Relaxin-3 B chain</fullName>
        </recommendedName>
    </component>
    <component>
        <recommendedName>
            <fullName>Relaxin-3 A chain</fullName>
        </recommendedName>
    </component>
</protein>
<proteinExistence type="evidence at protein level"/>
<sequence length="142" mass="15451">MARYMLLLLLAVWVLTGELWPGAEARAAPYGVRLCGREFIRAVIFTCGGSRWRRSDILAHEAMGDTFPDADADEDSLAGELDEAMGSSEWLALTKSPQAFYRGRPSWQGTPGVLRGSRDVLAGLSSSCCKWGCSKSEISSLC</sequence>
<evidence type="ECO:0000250" key="1"/>
<evidence type="ECO:0000269" key="2">
    <source>
    </source>
</evidence>
<evidence type="ECO:0000269" key="3">
    <source>
    </source>
</evidence>
<evidence type="ECO:0000305" key="4"/>
<evidence type="ECO:0007829" key="5">
    <source>
        <dbReference type="PDB" id="2FHW"/>
    </source>
</evidence>
<keyword id="KW-0002">3D-structure</keyword>
<keyword id="KW-0165">Cleavage on pair of basic residues</keyword>
<keyword id="KW-0903">Direct protein sequencing</keyword>
<keyword id="KW-1015">Disulfide bond</keyword>
<keyword id="KW-0372">Hormone</keyword>
<keyword id="KW-1185">Reference proteome</keyword>
<keyword id="KW-0964">Secreted</keyword>
<keyword id="KW-0732">Signal</keyword>
<accession>Q8WXF3</accession>
<accession>Q6UXW5</accession>